<name>DAPEL_BACHK</name>
<gene>
    <name type="ordered locus">BT9727_3722</name>
</gene>
<keyword id="KW-0028">Amino-acid biosynthesis</keyword>
<keyword id="KW-0220">Diaminopimelate biosynthesis</keyword>
<keyword id="KW-0378">Hydrolase</keyword>
<keyword id="KW-0457">Lysine biosynthesis</keyword>
<organism>
    <name type="scientific">Bacillus thuringiensis subsp. konkukian (strain 97-27)</name>
    <dbReference type="NCBI Taxonomy" id="281309"/>
    <lineage>
        <taxon>Bacteria</taxon>
        <taxon>Bacillati</taxon>
        <taxon>Bacillota</taxon>
        <taxon>Bacilli</taxon>
        <taxon>Bacillales</taxon>
        <taxon>Bacillaceae</taxon>
        <taxon>Bacillus</taxon>
        <taxon>Bacillus cereus group</taxon>
    </lineage>
</organism>
<dbReference type="EC" id="3.5.1.47" evidence="1"/>
<dbReference type="EMBL" id="AE017355">
    <property type="protein sequence ID" value="AAT61582.1"/>
    <property type="molecule type" value="Genomic_DNA"/>
</dbReference>
<dbReference type="RefSeq" id="WP_000301163.1">
    <property type="nucleotide sequence ID" value="NC_005957.1"/>
</dbReference>
<dbReference type="RefSeq" id="YP_038041.1">
    <property type="nucleotide sequence ID" value="NC_005957.1"/>
</dbReference>
<dbReference type="SMR" id="Q6HEI5"/>
<dbReference type="MEROPS" id="M20.A27"/>
<dbReference type="KEGG" id="btk:BT9727_3722"/>
<dbReference type="PATRIC" id="fig|281309.8.peg.3964"/>
<dbReference type="HOGENOM" id="CLU_023257_0_1_9"/>
<dbReference type="UniPathway" id="UPA00034">
    <property type="reaction ID" value="UER00024"/>
</dbReference>
<dbReference type="Proteomes" id="UP000001301">
    <property type="component" value="Chromosome"/>
</dbReference>
<dbReference type="GO" id="GO:0050118">
    <property type="term" value="F:N-acetyldiaminopimelate deacetylase activity"/>
    <property type="evidence" value="ECO:0007669"/>
    <property type="project" value="UniProtKB-UniRule"/>
</dbReference>
<dbReference type="GO" id="GO:0019877">
    <property type="term" value="P:diaminopimelate biosynthetic process"/>
    <property type="evidence" value="ECO:0007669"/>
    <property type="project" value="UniProtKB-UniRule"/>
</dbReference>
<dbReference type="GO" id="GO:0009089">
    <property type="term" value="P:lysine biosynthetic process via diaminopimelate"/>
    <property type="evidence" value="ECO:0007669"/>
    <property type="project" value="UniProtKB-UniRule"/>
</dbReference>
<dbReference type="CDD" id="cd05670">
    <property type="entry name" value="M20_Acy1_YkuR-like"/>
    <property type="match status" value="1"/>
</dbReference>
<dbReference type="FunFam" id="3.30.70.360:FF:000001">
    <property type="entry name" value="N-acetyldiaminopimelate deacetylase"/>
    <property type="match status" value="1"/>
</dbReference>
<dbReference type="Gene3D" id="3.30.70.360">
    <property type="match status" value="1"/>
</dbReference>
<dbReference type="Gene3D" id="3.40.630.10">
    <property type="entry name" value="Zn peptidases"/>
    <property type="match status" value="1"/>
</dbReference>
<dbReference type="HAMAP" id="MF_01692">
    <property type="entry name" value="DapEL"/>
    <property type="match status" value="1"/>
</dbReference>
<dbReference type="InterPro" id="IPR023905">
    <property type="entry name" value="AcetylDAP_deacetylase"/>
</dbReference>
<dbReference type="InterPro" id="IPR017439">
    <property type="entry name" value="Amidohydrolase"/>
</dbReference>
<dbReference type="InterPro" id="IPR036264">
    <property type="entry name" value="Bact_exopeptidase_dim_dom"/>
</dbReference>
<dbReference type="InterPro" id="IPR002933">
    <property type="entry name" value="Peptidase_M20"/>
</dbReference>
<dbReference type="InterPro" id="IPR011650">
    <property type="entry name" value="Peptidase_M20_dimer"/>
</dbReference>
<dbReference type="NCBIfam" id="TIGR01891">
    <property type="entry name" value="amidohydrolases"/>
    <property type="match status" value="1"/>
</dbReference>
<dbReference type="PANTHER" id="PTHR11014:SF98">
    <property type="entry name" value="N-ACETYLDIAMINOPIMELATE DEACETYLASE"/>
    <property type="match status" value="1"/>
</dbReference>
<dbReference type="PANTHER" id="PTHR11014">
    <property type="entry name" value="PEPTIDASE M20 FAMILY MEMBER"/>
    <property type="match status" value="1"/>
</dbReference>
<dbReference type="Pfam" id="PF07687">
    <property type="entry name" value="M20_dimer"/>
    <property type="match status" value="1"/>
</dbReference>
<dbReference type="Pfam" id="PF01546">
    <property type="entry name" value="Peptidase_M20"/>
    <property type="match status" value="1"/>
</dbReference>
<dbReference type="PIRSF" id="PIRSF005962">
    <property type="entry name" value="Pept_M20D_amidohydro"/>
    <property type="match status" value="1"/>
</dbReference>
<dbReference type="SUPFAM" id="SSF55031">
    <property type="entry name" value="Bacterial exopeptidase dimerisation domain"/>
    <property type="match status" value="1"/>
</dbReference>
<dbReference type="SUPFAM" id="SSF53187">
    <property type="entry name" value="Zn-dependent exopeptidases"/>
    <property type="match status" value="1"/>
</dbReference>
<proteinExistence type="inferred from homology"/>
<protein>
    <recommendedName>
        <fullName evidence="1">N-acetyldiaminopimelate deacetylase</fullName>
        <ecNumber evidence="1">3.5.1.47</ecNumber>
    </recommendedName>
</protein>
<feature type="chain" id="PRO_0000376751" description="N-acetyldiaminopimelate deacetylase">
    <location>
        <begin position="1"/>
        <end position="376"/>
    </location>
</feature>
<feature type="active site" evidence="1">
    <location>
        <position position="69"/>
    </location>
</feature>
<feature type="active site" description="Proton acceptor" evidence="1">
    <location>
        <position position="128"/>
    </location>
</feature>
<evidence type="ECO:0000255" key="1">
    <source>
        <dbReference type="HAMAP-Rule" id="MF_01692"/>
    </source>
</evidence>
<accession>Q6HEI5</accession>
<comment type="function">
    <text evidence="1">Catalyzes the conversion of N-acetyl-diaminopimelate to diaminopimelate and acetate.</text>
</comment>
<comment type="catalytic activity">
    <reaction evidence="1">
        <text>N-acetyl-(2S,6S)-2,6-diaminopimelate + H2O = (2S,6S)-2,6-diaminopimelate + acetate</text>
        <dbReference type="Rhea" id="RHEA:20405"/>
        <dbReference type="ChEBI" id="CHEBI:15377"/>
        <dbReference type="ChEBI" id="CHEBI:30089"/>
        <dbReference type="ChEBI" id="CHEBI:57609"/>
        <dbReference type="ChEBI" id="CHEBI:58767"/>
        <dbReference type="EC" id="3.5.1.47"/>
    </reaction>
</comment>
<comment type="pathway">
    <text evidence="1">Amino-acid biosynthesis; L-lysine biosynthesis via DAP pathway; LL-2,6-diaminopimelate from (S)-tetrahydrodipicolinate (acetylase route): step 3/3.</text>
</comment>
<comment type="similarity">
    <text evidence="1">Belongs to the peptidase M20A family. N-acetyldiaminopimelate deacetylase subfamily.</text>
</comment>
<reference key="1">
    <citation type="journal article" date="2006" name="J. Bacteriol.">
        <title>Pathogenomic sequence analysis of Bacillus cereus and Bacillus thuringiensis isolates closely related to Bacillus anthracis.</title>
        <authorList>
            <person name="Han C.S."/>
            <person name="Xie G."/>
            <person name="Challacombe J.F."/>
            <person name="Altherr M.R."/>
            <person name="Bhotika S.S."/>
            <person name="Bruce D."/>
            <person name="Campbell C.S."/>
            <person name="Campbell M.L."/>
            <person name="Chen J."/>
            <person name="Chertkov O."/>
            <person name="Cleland C."/>
            <person name="Dimitrijevic M."/>
            <person name="Doggett N.A."/>
            <person name="Fawcett J.J."/>
            <person name="Glavina T."/>
            <person name="Goodwin L.A."/>
            <person name="Hill K.K."/>
            <person name="Hitchcock P."/>
            <person name="Jackson P.J."/>
            <person name="Keim P."/>
            <person name="Kewalramani A.R."/>
            <person name="Longmire J."/>
            <person name="Lucas S."/>
            <person name="Malfatti S."/>
            <person name="McMurry K."/>
            <person name="Meincke L.J."/>
            <person name="Misra M."/>
            <person name="Moseman B.L."/>
            <person name="Mundt M."/>
            <person name="Munk A.C."/>
            <person name="Okinaka R.T."/>
            <person name="Parson-Quintana B."/>
            <person name="Reilly L.P."/>
            <person name="Richardson P."/>
            <person name="Robinson D.L."/>
            <person name="Rubin E."/>
            <person name="Saunders E."/>
            <person name="Tapia R."/>
            <person name="Tesmer J.G."/>
            <person name="Thayer N."/>
            <person name="Thompson L.S."/>
            <person name="Tice H."/>
            <person name="Ticknor L.O."/>
            <person name="Wills P.L."/>
            <person name="Brettin T.S."/>
            <person name="Gilna P."/>
        </authorList>
    </citation>
    <scope>NUCLEOTIDE SEQUENCE [LARGE SCALE GENOMIC DNA]</scope>
    <source>
        <strain>97-27</strain>
    </source>
</reference>
<sequence>MAVSKFVQIRRDLHKIPEIGFEEWKTQQYILDYIGTLLNEHVEVKVWRTGVIVKVKGKNPEKVIGYRADIDGLPITEETGYEFASVHEGMMHACGHDLHTTIGLGLLTAAVTERIDDDLVFLFQPAEEGPGGALPMLESEELKEWKPNIILGLHIAPEYPVGTIATKEGLLFANTSELYVDLKGKGGHAAYPHTANDMIVAASHLVTQLQSVISRNVNPLDSAVITIGKITGGTVQNIIAEKSRLEGTIRTLSVESMSRVKSRIEAIVAGIEASFQCEAVIDYGAMYHQVYNHEALTREFMQFVSEQTDMKVITCTEAMTGEDFGYMLQEIPGFMFWLGVNSEYGLHHAKLKPDEEAIEKAIVFLDQYVKWKGTRK</sequence>